<dbReference type="EMBL" id="CP000673">
    <property type="protein sequence ID" value="EDK35697.1"/>
    <property type="molecule type" value="Genomic_DNA"/>
</dbReference>
<dbReference type="RefSeq" id="WP_012104031.1">
    <property type="nucleotide sequence ID" value="NC_009706.1"/>
</dbReference>
<dbReference type="SMR" id="A5N3K1"/>
<dbReference type="STRING" id="431943.CKL_3712"/>
<dbReference type="KEGG" id="ckl:CKL_3712"/>
<dbReference type="eggNOG" id="COG0254">
    <property type="taxonomic scope" value="Bacteria"/>
</dbReference>
<dbReference type="HOGENOM" id="CLU_114306_4_3_9"/>
<dbReference type="Proteomes" id="UP000002411">
    <property type="component" value="Chromosome"/>
</dbReference>
<dbReference type="GO" id="GO:1990904">
    <property type="term" value="C:ribonucleoprotein complex"/>
    <property type="evidence" value="ECO:0007669"/>
    <property type="project" value="UniProtKB-KW"/>
</dbReference>
<dbReference type="GO" id="GO:0005840">
    <property type="term" value="C:ribosome"/>
    <property type="evidence" value="ECO:0007669"/>
    <property type="project" value="UniProtKB-KW"/>
</dbReference>
<dbReference type="GO" id="GO:0046872">
    <property type="term" value="F:metal ion binding"/>
    <property type="evidence" value="ECO:0007669"/>
    <property type="project" value="UniProtKB-KW"/>
</dbReference>
<dbReference type="GO" id="GO:0019843">
    <property type="term" value="F:rRNA binding"/>
    <property type="evidence" value="ECO:0007669"/>
    <property type="project" value="UniProtKB-KW"/>
</dbReference>
<dbReference type="GO" id="GO:0003735">
    <property type="term" value="F:structural constituent of ribosome"/>
    <property type="evidence" value="ECO:0007669"/>
    <property type="project" value="InterPro"/>
</dbReference>
<dbReference type="GO" id="GO:0006412">
    <property type="term" value="P:translation"/>
    <property type="evidence" value="ECO:0007669"/>
    <property type="project" value="UniProtKB-UniRule"/>
</dbReference>
<dbReference type="Gene3D" id="4.10.830.30">
    <property type="entry name" value="Ribosomal protein L31"/>
    <property type="match status" value="1"/>
</dbReference>
<dbReference type="HAMAP" id="MF_00501">
    <property type="entry name" value="Ribosomal_bL31_1"/>
    <property type="match status" value="1"/>
</dbReference>
<dbReference type="InterPro" id="IPR034704">
    <property type="entry name" value="Ribosomal_bL28/bL31-like_sf"/>
</dbReference>
<dbReference type="InterPro" id="IPR002150">
    <property type="entry name" value="Ribosomal_bL31"/>
</dbReference>
<dbReference type="InterPro" id="IPR027491">
    <property type="entry name" value="Ribosomal_bL31_A"/>
</dbReference>
<dbReference type="InterPro" id="IPR042105">
    <property type="entry name" value="Ribosomal_bL31_sf"/>
</dbReference>
<dbReference type="NCBIfam" id="TIGR00105">
    <property type="entry name" value="L31"/>
    <property type="match status" value="1"/>
</dbReference>
<dbReference type="NCBIfam" id="NF000612">
    <property type="entry name" value="PRK00019.1"/>
    <property type="match status" value="1"/>
</dbReference>
<dbReference type="NCBIfam" id="NF001809">
    <property type="entry name" value="PRK00528.1"/>
    <property type="match status" value="1"/>
</dbReference>
<dbReference type="PANTHER" id="PTHR33280">
    <property type="entry name" value="50S RIBOSOMAL PROTEIN L31, CHLOROPLASTIC"/>
    <property type="match status" value="1"/>
</dbReference>
<dbReference type="PANTHER" id="PTHR33280:SF1">
    <property type="entry name" value="LARGE RIBOSOMAL SUBUNIT PROTEIN BL31C"/>
    <property type="match status" value="1"/>
</dbReference>
<dbReference type="Pfam" id="PF01197">
    <property type="entry name" value="Ribosomal_L31"/>
    <property type="match status" value="1"/>
</dbReference>
<dbReference type="PRINTS" id="PR01249">
    <property type="entry name" value="RIBOSOMALL31"/>
</dbReference>
<dbReference type="SUPFAM" id="SSF143800">
    <property type="entry name" value="L28p-like"/>
    <property type="match status" value="1"/>
</dbReference>
<dbReference type="PROSITE" id="PS01143">
    <property type="entry name" value="RIBOSOMAL_L31"/>
    <property type="match status" value="1"/>
</dbReference>
<evidence type="ECO:0000255" key="1">
    <source>
        <dbReference type="HAMAP-Rule" id="MF_00501"/>
    </source>
</evidence>
<evidence type="ECO:0000305" key="2"/>
<proteinExistence type="inferred from homology"/>
<comment type="function">
    <text evidence="1">Binds the 23S rRNA.</text>
</comment>
<comment type="cofactor">
    <cofactor evidence="1">
        <name>Zn(2+)</name>
        <dbReference type="ChEBI" id="CHEBI:29105"/>
    </cofactor>
    <text evidence="1">Binds 1 zinc ion per subunit.</text>
</comment>
<comment type="subunit">
    <text evidence="1">Part of the 50S ribosomal subunit.</text>
</comment>
<comment type="similarity">
    <text evidence="1">Belongs to the bacterial ribosomal protein bL31 family. Type A subfamily.</text>
</comment>
<feature type="chain" id="PRO_1000126596" description="Large ribosomal subunit protein bL31">
    <location>
        <begin position="1"/>
        <end position="70"/>
    </location>
</feature>
<feature type="binding site" evidence="1">
    <location>
        <position position="17"/>
    </location>
    <ligand>
        <name>Zn(2+)</name>
        <dbReference type="ChEBI" id="CHEBI:29105"/>
    </ligand>
</feature>
<feature type="binding site" evidence="1">
    <location>
        <position position="19"/>
    </location>
    <ligand>
        <name>Zn(2+)</name>
        <dbReference type="ChEBI" id="CHEBI:29105"/>
    </ligand>
</feature>
<feature type="binding site" evidence="1">
    <location>
        <position position="37"/>
    </location>
    <ligand>
        <name>Zn(2+)</name>
        <dbReference type="ChEBI" id="CHEBI:29105"/>
    </ligand>
</feature>
<feature type="binding site" evidence="1">
    <location>
        <position position="40"/>
    </location>
    <ligand>
        <name>Zn(2+)</name>
        <dbReference type="ChEBI" id="CHEBI:29105"/>
    </ligand>
</feature>
<organism>
    <name type="scientific">Clostridium kluyveri (strain ATCC 8527 / DSM 555 / NBRC 12016 / NCIMB 10680 / K1)</name>
    <dbReference type="NCBI Taxonomy" id="431943"/>
    <lineage>
        <taxon>Bacteria</taxon>
        <taxon>Bacillati</taxon>
        <taxon>Bacillota</taxon>
        <taxon>Clostridia</taxon>
        <taxon>Eubacteriales</taxon>
        <taxon>Clostridiaceae</taxon>
        <taxon>Clostridium</taxon>
    </lineage>
</organism>
<sequence>MKKGIHPEYYHDSVVKCACGNTFTTGSTQKELKVEICSKCHPFFTGKQKLVDAGGRVDRFLKKFNLKNEE</sequence>
<gene>
    <name evidence="1" type="primary">rpmE</name>
    <name type="ordered locus">CKL_3712</name>
</gene>
<protein>
    <recommendedName>
        <fullName evidence="1">Large ribosomal subunit protein bL31</fullName>
    </recommendedName>
    <alternativeName>
        <fullName evidence="2">50S ribosomal protein L31</fullName>
    </alternativeName>
</protein>
<reference key="1">
    <citation type="journal article" date="2008" name="Proc. Natl. Acad. Sci. U.S.A.">
        <title>The genome of Clostridium kluyveri, a strict anaerobe with unique metabolic features.</title>
        <authorList>
            <person name="Seedorf H."/>
            <person name="Fricke W.F."/>
            <person name="Veith B."/>
            <person name="Brueggemann H."/>
            <person name="Liesegang H."/>
            <person name="Strittmatter A."/>
            <person name="Miethke M."/>
            <person name="Buckel W."/>
            <person name="Hinderberger J."/>
            <person name="Li F."/>
            <person name="Hagemeier C."/>
            <person name="Thauer R.K."/>
            <person name="Gottschalk G."/>
        </authorList>
    </citation>
    <scope>NUCLEOTIDE SEQUENCE [LARGE SCALE GENOMIC DNA]</scope>
    <source>
        <strain>ATCC 8527 / DSM 555 / NBRC 12016 / NCIMB 10680 / K1</strain>
    </source>
</reference>
<accession>A5N3K1</accession>
<keyword id="KW-0479">Metal-binding</keyword>
<keyword id="KW-1185">Reference proteome</keyword>
<keyword id="KW-0687">Ribonucleoprotein</keyword>
<keyword id="KW-0689">Ribosomal protein</keyword>
<keyword id="KW-0694">RNA-binding</keyword>
<keyword id="KW-0699">rRNA-binding</keyword>
<keyword id="KW-0862">Zinc</keyword>
<name>RL31_CLOK5</name>